<keyword id="KW-0687">Ribonucleoprotein</keyword>
<keyword id="KW-0689">Ribosomal protein</keyword>
<keyword id="KW-0694">RNA-binding</keyword>
<keyword id="KW-0699">rRNA-binding</keyword>
<proteinExistence type="inferred from homology"/>
<organism>
    <name type="scientific">Yersinia pestis bv. Antiqua (strain Nepal516)</name>
    <dbReference type="NCBI Taxonomy" id="377628"/>
    <lineage>
        <taxon>Bacteria</taxon>
        <taxon>Pseudomonadati</taxon>
        <taxon>Pseudomonadota</taxon>
        <taxon>Gammaproteobacteria</taxon>
        <taxon>Enterobacterales</taxon>
        <taxon>Yersiniaceae</taxon>
        <taxon>Yersinia</taxon>
    </lineage>
</organism>
<comment type="function">
    <text evidence="1">Binds to the 23S rRNA.</text>
</comment>
<comment type="subunit">
    <text evidence="1">Part of the 50S ribosomal subunit.</text>
</comment>
<comment type="similarity">
    <text evidence="1">Belongs to the universal ribosomal protein uL15 family.</text>
</comment>
<sequence length="144" mass="15207">MRLNTLSPAEGAKHAPKRVGRGIGSGLGKTAGRGHKGQNSRSGGGVRRGFEGGQMPLYRRLPKFGFTSRKAMITAEVRLSELALVEGDVIDLNTLKAANVVGIQMEFVKVILSGEVNRAVTLRGLRVTKGARAAIEAAGGKIEE</sequence>
<name>RL15_YERPN</name>
<gene>
    <name evidence="1" type="primary">rplO</name>
    <name type="ordered locus">YPN_3840</name>
    <name type="ORF">YP516_4363</name>
</gene>
<feature type="chain" id="PRO_1000054565" description="Large ribosomal subunit protein uL15">
    <location>
        <begin position="1"/>
        <end position="144"/>
    </location>
</feature>
<feature type="region of interest" description="Disordered" evidence="2">
    <location>
        <begin position="1"/>
        <end position="52"/>
    </location>
</feature>
<feature type="compositionally biased region" description="Gly residues" evidence="2">
    <location>
        <begin position="21"/>
        <end position="31"/>
    </location>
</feature>
<protein>
    <recommendedName>
        <fullName evidence="1">Large ribosomal subunit protein uL15</fullName>
    </recommendedName>
    <alternativeName>
        <fullName evidence="3">50S ribosomal protein L15</fullName>
    </alternativeName>
</protein>
<evidence type="ECO:0000255" key="1">
    <source>
        <dbReference type="HAMAP-Rule" id="MF_01341"/>
    </source>
</evidence>
<evidence type="ECO:0000256" key="2">
    <source>
        <dbReference type="SAM" id="MobiDB-lite"/>
    </source>
</evidence>
<evidence type="ECO:0000305" key="3"/>
<dbReference type="EMBL" id="CP000305">
    <property type="protein sequence ID" value="ABG20167.1"/>
    <property type="molecule type" value="Genomic_DNA"/>
</dbReference>
<dbReference type="EMBL" id="ACNQ01000019">
    <property type="protein sequence ID" value="EEO74755.1"/>
    <property type="molecule type" value="Genomic_DNA"/>
</dbReference>
<dbReference type="RefSeq" id="WP_002213341.1">
    <property type="nucleotide sequence ID" value="NZ_ACNQ01000019.1"/>
</dbReference>
<dbReference type="SMR" id="Q1CCW3"/>
<dbReference type="GeneID" id="96663177"/>
<dbReference type="KEGG" id="ypn:YPN_3840"/>
<dbReference type="HOGENOM" id="CLU_055188_4_2_6"/>
<dbReference type="Proteomes" id="UP000008936">
    <property type="component" value="Chromosome"/>
</dbReference>
<dbReference type="GO" id="GO:0022625">
    <property type="term" value="C:cytosolic large ribosomal subunit"/>
    <property type="evidence" value="ECO:0007669"/>
    <property type="project" value="TreeGrafter"/>
</dbReference>
<dbReference type="GO" id="GO:0019843">
    <property type="term" value="F:rRNA binding"/>
    <property type="evidence" value="ECO:0007669"/>
    <property type="project" value="UniProtKB-UniRule"/>
</dbReference>
<dbReference type="GO" id="GO:0003735">
    <property type="term" value="F:structural constituent of ribosome"/>
    <property type="evidence" value="ECO:0007669"/>
    <property type="project" value="InterPro"/>
</dbReference>
<dbReference type="GO" id="GO:0006412">
    <property type="term" value="P:translation"/>
    <property type="evidence" value="ECO:0007669"/>
    <property type="project" value="UniProtKB-UniRule"/>
</dbReference>
<dbReference type="FunFam" id="3.100.10.10:FF:000003">
    <property type="entry name" value="50S ribosomal protein L15"/>
    <property type="match status" value="1"/>
</dbReference>
<dbReference type="Gene3D" id="3.100.10.10">
    <property type="match status" value="1"/>
</dbReference>
<dbReference type="HAMAP" id="MF_01341">
    <property type="entry name" value="Ribosomal_uL15"/>
    <property type="match status" value="1"/>
</dbReference>
<dbReference type="InterPro" id="IPR030878">
    <property type="entry name" value="Ribosomal_uL15"/>
</dbReference>
<dbReference type="InterPro" id="IPR021131">
    <property type="entry name" value="Ribosomal_uL15/eL18"/>
</dbReference>
<dbReference type="InterPro" id="IPR036227">
    <property type="entry name" value="Ribosomal_uL15/eL18_sf"/>
</dbReference>
<dbReference type="InterPro" id="IPR005749">
    <property type="entry name" value="Ribosomal_uL15_bac-type"/>
</dbReference>
<dbReference type="InterPro" id="IPR001196">
    <property type="entry name" value="Ribosomal_uL15_CS"/>
</dbReference>
<dbReference type="NCBIfam" id="TIGR01071">
    <property type="entry name" value="rplO_bact"/>
    <property type="match status" value="1"/>
</dbReference>
<dbReference type="PANTHER" id="PTHR12934">
    <property type="entry name" value="50S RIBOSOMAL PROTEIN L15"/>
    <property type="match status" value="1"/>
</dbReference>
<dbReference type="PANTHER" id="PTHR12934:SF11">
    <property type="entry name" value="LARGE RIBOSOMAL SUBUNIT PROTEIN UL15M"/>
    <property type="match status" value="1"/>
</dbReference>
<dbReference type="Pfam" id="PF00828">
    <property type="entry name" value="Ribosomal_L27A"/>
    <property type="match status" value="1"/>
</dbReference>
<dbReference type="SUPFAM" id="SSF52080">
    <property type="entry name" value="Ribosomal proteins L15p and L18e"/>
    <property type="match status" value="1"/>
</dbReference>
<dbReference type="PROSITE" id="PS00475">
    <property type="entry name" value="RIBOSOMAL_L15"/>
    <property type="match status" value="1"/>
</dbReference>
<reference key="1">
    <citation type="journal article" date="2006" name="J. Bacteriol.">
        <title>Complete genome sequence of Yersinia pestis strains Antiqua and Nepal516: evidence of gene reduction in an emerging pathogen.</title>
        <authorList>
            <person name="Chain P.S.G."/>
            <person name="Hu P."/>
            <person name="Malfatti S.A."/>
            <person name="Radnedge L."/>
            <person name="Larimer F."/>
            <person name="Vergez L.M."/>
            <person name="Worsham P."/>
            <person name="Chu M.C."/>
            <person name="Andersen G.L."/>
        </authorList>
    </citation>
    <scope>NUCLEOTIDE SEQUENCE [LARGE SCALE GENOMIC DNA]</scope>
    <source>
        <strain>Nepal516</strain>
    </source>
</reference>
<reference key="2">
    <citation type="submission" date="2009-04" db="EMBL/GenBank/DDBJ databases">
        <title>Yersinia pestis Nepal516A whole genome shotgun sequencing project.</title>
        <authorList>
            <person name="Plunkett G. III"/>
            <person name="Anderson B.D."/>
            <person name="Baumler D.J."/>
            <person name="Burland V."/>
            <person name="Cabot E.L."/>
            <person name="Glasner J.D."/>
            <person name="Mau B."/>
            <person name="Neeno-Eckwall E."/>
            <person name="Perna N.T."/>
            <person name="Munk A.C."/>
            <person name="Tapia R."/>
            <person name="Green L.D."/>
            <person name="Rogers Y.C."/>
            <person name="Detter J.C."/>
            <person name="Bruce D.C."/>
            <person name="Brettin T.S."/>
        </authorList>
    </citation>
    <scope>NUCLEOTIDE SEQUENCE [LARGE SCALE GENOMIC DNA]</scope>
    <source>
        <strain>Nepal516</strain>
    </source>
</reference>
<accession>Q1CCW3</accession>
<accession>D1Q2K2</accession>